<dbReference type="EC" id="2.7.11.1"/>
<dbReference type="EMBL" id="AL591136">
    <property type="status" value="NOT_ANNOTATED_CDS"/>
    <property type="molecule type" value="Genomic_DNA"/>
</dbReference>
<dbReference type="EMBL" id="BC016522">
    <property type="protein sequence ID" value="AAH16522.1"/>
    <property type="status" value="ALT_INIT"/>
    <property type="molecule type" value="mRNA"/>
</dbReference>
<dbReference type="EMBL" id="BC034906">
    <property type="protein sequence ID" value="AAH34906.1"/>
    <property type="molecule type" value="mRNA"/>
</dbReference>
<dbReference type="EMBL" id="AK173156">
    <property type="protein sequence ID" value="BAD32434.1"/>
    <property type="status" value="ALT_INIT"/>
    <property type="molecule type" value="mRNA"/>
</dbReference>
<dbReference type="CCDS" id="CCDS36235.1"/>
<dbReference type="RefSeq" id="NP_001351062.1">
    <property type="nucleotide sequence ID" value="NM_001364133.1"/>
</dbReference>
<dbReference type="RefSeq" id="NP_001351063.1">
    <property type="nucleotide sequence ID" value="NM_001364134.1"/>
</dbReference>
<dbReference type="RefSeq" id="NP_659074.2">
    <property type="nucleotide sequence ID" value="NM_144825.2"/>
</dbReference>
<dbReference type="RefSeq" id="XP_006533021.1">
    <property type="nucleotide sequence ID" value="XM_006532958.3"/>
</dbReference>
<dbReference type="RefSeq" id="XP_006533022.1">
    <property type="nucleotide sequence ID" value="XM_006532959.5"/>
</dbReference>
<dbReference type="RefSeq" id="XP_011247231.1">
    <property type="nucleotide sequence ID" value="XM_011248929.2"/>
</dbReference>
<dbReference type="RefSeq" id="XP_011247232.1">
    <property type="nucleotide sequence ID" value="XM_011248930.4"/>
</dbReference>
<dbReference type="RefSeq" id="XP_011247233.1">
    <property type="nucleotide sequence ID" value="XM_011248931.2"/>
</dbReference>
<dbReference type="RefSeq" id="XP_030101697.1">
    <property type="nucleotide sequence ID" value="XM_030245837.2"/>
</dbReference>
<dbReference type="SMR" id="Q5F2E8"/>
<dbReference type="BioGRID" id="229824">
    <property type="interactions" value="7"/>
</dbReference>
<dbReference type="FunCoup" id="Q5F2E8">
    <property type="interactions" value="3353"/>
</dbReference>
<dbReference type="IntAct" id="Q5F2E8">
    <property type="interactions" value="1"/>
</dbReference>
<dbReference type="STRING" id="10090.ENSMUSP00000055470"/>
<dbReference type="iPTMnet" id="Q5F2E8"/>
<dbReference type="PhosphoSitePlus" id="Q5F2E8"/>
<dbReference type="SwissPalm" id="Q5F2E8"/>
<dbReference type="jPOST" id="Q5F2E8"/>
<dbReference type="PaxDb" id="10090-ENSMUSP00000055470"/>
<dbReference type="ProteomicsDB" id="262931"/>
<dbReference type="Pumba" id="Q5F2E8"/>
<dbReference type="Antibodypedia" id="2089">
    <property type="antibodies" value="392 antibodies from 33 providers"/>
</dbReference>
<dbReference type="DNASU" id="216965"/>
<dbReference type="Ensembl" id="ENSMUST00000017435.11">
    <property type="protein sequence ID" value="ENSMUSP00000017435.5"/>
    <property type="gene ID" value="ENSMUSG00000017291.14"/>
</dbReference>
<dbReference type="Ensembl" id="ENSMUST00000058496.8">
    <property type="protein sequence ID" value="ENSMUSP00000055470.8"/>
    <property type="gene ID" value="ENSMUSG00000017291.14"/>
</dbReference>
<dbReference type="GeneID" id="216965"/>
<dbReference type="KEGG" id="mmu:216965"/>
<dbReference type="UCSC" id="uc007khc.1">
    <property type="organism name" value="mouse"/>
</dbReference>
<dbReference type="AGR" id="MGI:1914490"/>
<dbReference type="CTD" id="57551"/>
<dbReference type="MGI" id="MGI:1914490">
    <property type="gene designation" value="Taok1"/>
</dbReference>
<dbReference type="VEuPathDB" id="HostDB:ENSMUSG00000017291"/>
<dbReference type="eggNOG" id="KOG0577">
    <property type="taxonomic scope" value="Eukaryota"/>
</dbReference>
<dbReference type="GeneTree" id="ENSGT00940000155796"/>
<dbReference type="HOGENOM" id="CLU_000288_2_2_1"/>
<dbReference type="InParanoid" id="Q5F2E8"/>
<dbReference type="OMA" id="XAKVMAN"/>
<dbReference type="OrthoDB" id="10016527at2759"/>
<dbReference type="PhylomeDB" id="Q5F2E8"/>
<dbReference type="TreeFam" id="TF351444"/>
<dbReference type="Reactome" id="R-MMU-141444">
    <property type="pathway name" value="Amplification of signal from unattached kinetochores via a MAD2 inhibitory signal"/>
</dbReference>
<dbReference type="Reactome" id="R-MMU-2467813">
    <property type="pathway name" value="Separation of Sister Chromatids"/>
</dbReference>
<dbReference type="Reactome" id="R-MMU-2500257">
    <property type="pathway name" value="Resolution of Sister Chromatid Cohesion"/>
</dbReference>
<dbReference type="Reactome" id="R-MMU-5663220">
    <property type="pathway name" value="RHO GTPases Activate Formins"/>
</dbReference>
<dbReference type="Reactome" id="R-MMU-68877">
    <property type="pathway name" value="Mitotic Prometaphase"/>
</dbReference>
<dbReference type="Reactome" id="R-MMU-9648025">
    <property type="pathway name" value="EML4 and NUDC in mitotic spindle formation"/>
</dbReference>
<dbReference type="BioGRID-ORCS" id="216965">
    <property type="hits" value="10 hits in 119 CRISPR screens"/>
</dbReference>
<dbReference type="CD-CODE" id="CE726F99">
    <property type="entry name" value="Postsynaptic density"/>
</dbReference>
<dbReference type="ChiTaRS" id="Taok1">
    <property type="organism name" value="mouse"/>
</dbReference>
<dbReference type="PRO" id="PR:Q5F2E8"/>
<dbReference type="Proteomes" id="UP000000589">
    <property type="component" value="Chromosome 11"/>
</dbReference>
<dbReference type="RNAct" id="Q5F2E8">
    <property type="molecule type" value="protein"/>
</dbReference>
<dbReference type="Bgee" id="ENSMUSG00000017291">
    <property type="expression patterns" value="Expressed in ventromedial nucleus of hypothalamus and 264 other cell types or tissues"/>
</dbReference>
<dbReference type="ExpressionAtlas" id="Q5F2E8">
    <property type="expression patterns" value="baseline and differential"/>
</dbReference>
<dbReference type="GO" id="GO:0005829">
    <property type="term" value="C:cytosol"/>
    <property type="evidence" value="ECO:0007669"/>
    <property type="project" value="Ensembl"/>
</dbReference>
<dbReference type="GO" id="GO:0015630">
    <property type="term" value="C:microtubule cytoskeleton"/>
    <property type="evidence" value="ECO:0007669"/>
    <property type="project" value="Ensembl"/>
</dbReference>
<dbReference type="GO" id="GO:0016604">
    <property type="term" value="C:nuclear body"/>
    <property type="evidence" value="ECO:0007669"/>
    <property type="project" value="Ensembl"/>
</dbReference>
<dbReference type="GO" id="GO:0048471">
    <property type="term" value="C:perinuclear region of cytoplasm"/>
    <property type="evidence" value="ECO:0007669"/>
    <property type="project" value="Ensembl"/>
</dbReference>
<dbReference type="GO" id="GO:0005886">
    <property type="term" value="C:plasma membrane"/>
    <property type="evidence" value="ECO:0007669"/>
    <property type="project" value="Ensembl"/>
</dbReference>
<dbReference type="GO" id="GO:0043014">
    <property type="term" value="F:alpha-tubulin binding"/>
    <property type="evidence" value="ECO:0007669"/>
    <property type="project" value="Ensembl"/>
</dbReference>
<dbReference type="GO" id="GO:0005524">
    <property type="term" value="F:ATP binding"/>
    <property type="evidence" value="ECO:0007669"/>
    <property type="project" value="UniProtKB-KW"/>
</dbReference>
<dbReference type="GO" id="GO:0048487">
    <property type="term" value="F:beta-tubulin binding"/>
    <property type="evidence" value="ECO:0007669"/>
    <property type="project" value="Ensembl"/>
</dbReference>
<dbReference type="GO" id="GO:0106310">
    <property type="term" value="F:protein serine kinase activity"/>
    <property type="evidence" value="ECO:0007669"/>
    <property type="project" value="RHEA"/>
</dbReference>
<dbReference type="GO" id="GO:0004674">
    <property type="term" value="F:protein serine/threonine kinase activity"/>
    <property type="evidence" value="ECO:0000250"/>
    <property type="project" value="UniProtKB"/>
</dbReference>
<dbReference type="GO" id="GO:0021954">
    <property type="term" value="P:central nervous system neuron development"/>
    <property type="evidence" value="ECO:0000315"/>
    <property type="project" value="UniProtKB"/>
</dbReference>
<dbReference type="GO" id="GO:0006974">
    <property type="term" value="P:DNA damage response"/>
    <property type="evidence" value="ECO:0000250"/>
    <property type="project" value="UniProtKB"/>
</dbReference>
<dbReference type="GO" id="GO:0006281">
    <property type="term" value="P:DNA repair"/>
    <property type="evidence" value="ECO:0007669"/>
    <property type="project" value="UniProtKB-KW"/>
</dbReference>
<dbReference type="GO" id="GO:0097194">
    <property type="term" value="P:execution phase of apoptosis"/>
    <property type="evidence" value="ECO:0000250"/>
    <property type="project" value="UniProtKB"/>
</dbReference>
<dbReference type="GO" id="GO:0000226">
    <property type="term" value="P:microtubule cytoskeleton organization"/>
    <property type="evidence" value="ECO:0007669"/>
    <property type="project" value="Ensembl"/>
</dbReference>
<dbReference type="GO" id="GO:0007095">
    <property type="term" value="P:mitotic G2 DNA damage checkpoint signaling"/>
    <property type="evidence" value="ECO:0000250"/>
    <property type="project" value="UniProtKB"/>
</dbReference>
<dbReference type="GO" id="GO:0007026">
    <property type="term" value="P:negative regulation of microtubule depolymerization"/>
    <property type="evidence" value="ECO:0007669"/>
    <property type="project" value="Ensembl"/>
</dbReference>
<dbReference type="GO" id="GO:0070050">
    <property type="term" value="P:neuron cellular homeostasis"/>
    <property type="evidence" value="ECO:0007669"/>
    <property type="project" value="Ensembl"/>
</dbReference>
<dbReference type="GO" id="GO:0046330">
    <property type="term" value="P:positive regulation of JNK cascade"/>
    <property type="evidence" value="ECO:0000250"/>
    <property type="project" value="UniProtKB"/>
</dbReference>
<dbReference type="GO" id="GO:0032874">
    <property type="term" value="P:positive regulation of stress-activated MAPK cascade"/>
    <property type="evidence" value="ECO:0000250"/>
    <property type="project" value="UniProtKB"/>
</dbReference>
<dbReference type="GO" id="GO:0051493">
    <property type="term" value="P:regulation of cytoskeleton organization"/>
    <property type="evidence" value="ECO:0000250"/>
    <property type="project" value="UniProtKB"/>
</dbReference>
<dbReference type="CDD" id="cd06635">
    <property type="entry name" value="STKc_TAO1"/>
    <property type="match status" value="1"/>
</dbReference>
<dbReference type="FunFam" id="1.10.510.10:FF:000030">
    <property type="entry name" value="Serine/threonine-protein kinase TAO2, putative"/>
    <property type="match status" value="1"/>
</dbReference>
<dbReference type="FunFam" id="3.30.200.20:FF:000029">
    <property type="entry name" value="Serine/threonine-protein kinase TAO2, putative"/>
    <property type="match status" value="1"/>
</dbReference>
<dbReference type="Gene3D" id="3.30.200.20">
    <property type="entry name" value="Phosphorylase Kinase, domain 1"/>
    <property type="match status" value="1"/>
</dbReference>
<dbReference type="Gene3D" id="1.10.510.10">
    <property type="entry name" value="Transferase(Phosphotransferase) domain 1"/>
    <property type="match status" value="1"/>
</dbReference>
<dbReference type="InterPro" id="IPR011009">
    <property type="entry name" value="Kinase-like_dom_sf"/>
</dbReference>
<dbReference type="InterPro" id="IPR000719">
    <property type="entry name" value="Prot_kinase_dom"/>
</dbReference>
<dbReference type="InterPro" id="IPR017441">
    <property type="entry name" value="Protein_kinase_ATP_BS"/>
</dbReference>
<dbReference type="InterPro" id="IPR008271">
    <property type="entry name" value="Ser/Thr_kinase_AS"/>
</dbReference>
<dbReference type="InterPro" id="IPR051234">
    <property type="entry name" value="TAO_STE20_kinase"/>
</dbReference>
<dbReference type="PANTHER" id="PTHR47167">
    <property type="entry name" value="SERINE/THREONINE-PROTEIN KINASE TAO1-LIKE PROTEIN"/>
    <property type="match status" value="1"/>
</dbReference>
<dbReference type="PANTHER" id="PTHR47167:SF8">
    <property type="entry name" value="SERINE_THREONINE-PROTEIN KINASE TAO1"/>
    <property type="match status" value="1"/>
</dbReference>
<dbReference type="Pfam" id="PF00069">
    <property type="entry name" value="Pkinase"/>
    <property type="match status" value="1"/>
</dbReference>
<dbReference type="SMART" id="SM00220">
    <property type="entry name" value="S_TKc"/>
    <property type="match status" value="1"/>
</dbReference>
<dbReference type="SUPFAM" id="SSF56112">
    <property type="entry name" value="Protein kinase-like (PK-like)"/>
    <property type="match status" value="1"/>
</dbReference>
<dbReference type="PROSITE" id="PS00107">
    <property type="entry name" value="PROTEIN_KINASE_ATP"/>
    <property type="match status" value="1"/>
</dbReference>
<dbReference type="PROSITE" id="PS50011">
    <property type="entry name" value="PROTEIN_KINASE_DOM"/>
    <property type="match status" value="1"/>
</dbReference>
<dbReference type="PROSITE" id="PS00108">
    <property type="entry name" value="PROTEIN_KINASE_ST"/>
    <property type="match status" value="1"/>
</dbReference>
<accession>Q5F2E8</accession>
<accession>Q69ZL2</accession>
<accession>Q8JZX2</accession>
<accession>Q91VG7</accession>
<reference key="1">
    <citation type="journal article" date="2009" name="PLoS Biol.">
        <title>Lineage-specific biology revealed by a finished genome assembly of the mouse.</title>
        <authorList>
            <person name="Church D.M."/>
            <person name="Goodstadt L."/>
            <person name="Hillier L.W."/>
            <person name="Zody M.C."/>
            <person name="Goldstein S."/>
            <person name="She X."/>
            <person name="Bult C.J."/>
            <person name="Agarwala R."/>
            <person name="Cherry J.L."/>
            <person name="DiCuccio M."/>
            <person name="Hlavina W."/>
            <person name="Kapustin Y."/>
            <person name="Meric P."/>
            <person name="Maglott D."/>
            <person name="Birtle Z."/>
            <person name="Marques A.C."/>
            <person name="Graves T."/>
            <person name="Zhou S."/>
            <person name="Teague B."/>
            <person name="Potamousis K."/>
            <person name="Churas C."/>
            <person name="Place M."/>
            <person name="Herschleb J."/>
            <person name="Runnheim R."/>
            <person name="Forrest D."/>
            <person name="Amos-Landgraf J."/>
            <person name="Schwartz D.C."/>
            <person name="Cheng Z."/>
            <person name="Lindblad-Toh K."/>
            <person name="Eichler E.E."/>
            <person name="Ponting C.P."/>
        </authorList>
    </citation>
    <scope>NUCLEOTIDE SEQUENCE [LARGE SCALE GENOMIC DNA]</scope>
    <source>
        <strain>C57BL/6J</strain>
    </source>
</reference>
<reference key="2">
    <citation type="journal article" date="2004" name="Genome Res.">
        <title>The status, quality, and expansion of the NIH full-length cDNA project: the Mammalian Gene Collection (MGC).</title>
        <authorList>
            <consortium name="The MGC Project Team"/>
        </authorList>
    </citation>
    <scope>NUCLEOTIDE SEQUENCE [LARGE SCALE MRNA] OF 437-1001</scope>
    <source>
        <strain>FVB/N</strain>
        <tissue>Mammary gland</tissue>
        <tissue>Thymus</tissue>
    </source>
</reference>
<reference key="3">
    <citation type="journal article" date="2004" name="DNA Res.">
        <title>Prediction of the coding sequences of mouse homologues of KIAA gene: IV. The complete nucleotide sequences of 500 mouse KIAA-homologous cDNAs identified by screening of terminal sequences of cDNA clones randomly sampled from size-fractionated libraries.</title>
        <authorList>
            <person name="Okazaki N."/>
            <person name="Kikuno R."/>
            <person name="Ohara R."/>
            <person name="Inamoto S."/>
            <person name="Koseki H."/>
            <person name="Hiraoka S."/>
            <person name="Saga Y."/>
            <person name="Seino S."/>
            <person name="Nishimura M."/>
            <person name="Kaisho T."/>
            <person name="Hoshino K."/>
            <person name="Kitamura H."/>
            <person name="Nagase T."/>
            <person name="Ohara O."/>
            <person name="Koga H."/>
        </authorList>
    </citation>
    <scope>NUCLEOTIDE SEQUENCE [LARGE SCALE MRNA] OF 657-1001</scope>
    <source>
        <tissue>Brain</tissue>
    </source>
</reference>
<reference key="4">
    <citation type="journal article" date="2006" name="Mol. Cell. Proteomics">
        <title>Comprehensive identification of phosphorylation sites in postsynaptic density preparations.</title>
        <authorList>
            <person name="Trinidad J.C."/>
            <person name="Specht C.G."/>
            <person name="Thalhammer A."/>
            <person name="Schoepfer R."/>
            <person name="Burlingame A.L."/>
        </authorList>
    </citation>
    <scope>IDENTIFICATION BY MASS SPECTROMETRY [LARGE SCALE ANALYSIS]</scope>
    <source>
        <tissue>Brain</tissue>
    </source>
</reference>
<reference key="5">
    <citation type="journal article" date="2007" name="Mol. Cell. Proteomics">
        <title>Qualitative and quantitative analyses of protein phosphorylation in naive and stimulated mouse synaptosomal preparations.</title>
        <authorList>
            <person name="Munton R.P."/>
            <person name="Tweedie-Cullen R."/>
            <person name="Livingstone-Zatchej M."/>
            <person name="Weinandy F."/>
            <person name="Waidelich M."/>
            <person name="Longo D."/>
            <person name="Gehrig P."/>
            <person name="Potthast F."/>
            <person name="Rutishauser D."/>
            <person name="Gerrits B."/>
            <person name="Panse C."/>
            <person name="Schlapbach R."/>
            <person name="Mansuy I.M."/>
        </authorList>
    </citation>
    <scope>IDENTIFICATION BY MASS SPECTROMETRY [LARGE SCALE ANALYSIS]</scope>
    <source>
        <tissue>Brain cortex</tissue>
    </source>
</reference>
<reference key="6">
    <citation type="journal article" date="2009" name="Immunity">
        <title>The phagosomal proteome in interferon-gamma-activated macrophages.</title>
        <authorList>
            <person name="Trost M."/>
            <person name="English L."/>
            <person name="Lemieux S."/>
            <person name="Courcelles M."/>
            <person name="Desjardins M."/>
            <person name="Thibault P."/>
        </authorList>
    </citation>
    <scope>PHOSPHORYLATION [LARGE SCALE ANALYSIS] AT SER-421</scope>
    <scope>IDENTIFICATION BY MASS SPECTROMETRY [LARGE SCALE ANALYSIS]</scope>
</reference>
<reference key="7">
    <citation type="journal article" date="2010" name="Cell">
        <title>A tissue-specific atlas of mouse protein phosphorylation and expression.</title>
        <authorList>
            <person name="Huttlin E.L."/>
            <person name="Jedrychowski M.P."/>
            <person name="Elias J.E."/>
            <person name="Goswami T."/>
            <person name="Rad R."/>
            <person name="Beausoleil S.A."/>
            <person name="Villen J."/>
            <person name="Haas W."/>
            <person name="Sowa M.E."/>
            <person name="Gygi S.P."/>
        </authorList>
    </citation>
    <scope>PHOSPHORYLATION [LARGE SCALE ANALYSIS] AT SER-9 AND SER-421</scope>
    <scope>IDENTIFICATION BY MASS SPECTROMETRY [LARGE SCALE ANALYSIS]</scope>
    <source>
        <tissue>Brain</tissue>
        <tissue>Heart</tissue>
        <tissue>Kidney</tissue>
        <tissue>Lung</tissue>
        <tissue>Testis</tissue>
    </source>
</reference>
<reference key="8">
    <citation type="journal article" date="2021" name="Hum. Mutat.">
        <title>TAOK1 is associated with neurodevelopmental disorder and essential for neuronal maturation and cortical development.</title>
        <authorList>
            <person name="van Woerden G.M."/>
            <person name="Bos M."/>
            <person name="de Konink C."/>
            <person name="Distel B."/>
            <person name="Avagliano Trezza R."/>
            <person name="Shur N.E."/>
            <person name="Baranano K."/>
            <person name="Mahida S."/>
            <person name="Chassevent A."/>
            <person name="Schreiber A."/>
            <person name="Erwin A.L."/>
            <person name="Gripp K.W."/>
            <person name="Rehman F."/>
            <person name="Brulleman S."/>
            <person name="McCormack R."/>
            <person name="de Geus G."/>
            <person name="Kalsner L."/>
            <person name="Sorlin A."/>
            <person name="Bruel A.L."/>
            <person name="Koolen D.A."/>
            <person name="Gabriel M.K."/>
            <person name="Rossi M."/>
            <person name="Fitzpatrick D.R."/>
            <person name="Wilkie A.O.M."/>
            <person name="Calpena E."/>
            <person name="Johnson D."/>
            <person name="Brooks A."/>
            <person name="van Slegtenhorst M."/>
            <person name="Fleischer J."/>
            <person name="Groepper D."/>
            <person name="Lindstrom K."/>
            <person name="Innes A.M."/>
            <person name="Goodwin A."/>
            <person name="Humberson J."/>
            <person name="Noyes A."/>
            <person name="Langley K.G."/>
            <person name="Telegrafi A."/>
            <person name="Blevins A."/>
            <person name="Hoffman J."/>
            <person name="Guillen Sacoto M.J."/>
            <person name="Juusola J."/>
            <person name="Monaghan K.G."/>
            <person name="Punj S."/>
            <person name="Simon M."/>
            <person name="Pfundt R."/>
            <person name="Elgersma Y."/>
            <person name="Kleefstra T."/>
        </authorList>
    </citation>
    <scope>FUNCTION</scope>
</reference>
<gene>
    <name type="primary">Taok1</name>
    <name type="synonym">Kiaa1361</name>
</gene>
<proteinExistence type="evidence at protein level"/>
<name>TAOK1_MOUSE</name>
<organism>
    <name type="scientific">Mus musculus</name>
    <name type="common">Mouse</name>
    <dbReference type="NCBI Taxonomy" id="10090"/>
    <lineage>
        <taxon>Eukaryota</taxon>
        <taxon>Metazoa</taxon>
        <taxon>Chordata</taxon>
        <taxon>Craniata</taxon>
        <taxon>Vertebrata</taxon>
        <taxon>Euteleostomi</taxon>
        <taxon>Mammalia</taxon>
        <taxon>Eutheria</taxon>
        <taxon>Euarchontoglires</taxon>
        <taxon>Glires</taxon>
        <taxon>Rodentia</taxon>
        <taxon>Myomorpha</taxon>
        <taxon>Muroidea</taxon>
        <taxon>Muridae</taxon>
        <taxon>Murinae</taxon>
        <taxon>Mus</taxon>
        <taxon>Mus</taxon>
    </lineage>
</organism>
<evidence type="ECO:0000250" key="1"/>
<evidence type="ECO:0000250" key="2">
    <source>
        <dbReference type="UniProtKB" id="O88664"/>
    </source>
</evidence>
<evidence type="ECO:0000250" key="3">
    <source>
        <dbReference type="UniProtKB" id="Q7L7X3"/>
    </source>
</evidence>
<evidence type="ECO:0000255" key="4"/>
<evidence type="ECO:0000255" key="5">
    <source>
        <dbReference type="PROSITE-ProRule" id="PRU00159"/>
    </source>
</evidence>
<evidence type="ECO:0000255" key="6">
    <source>
        <dbReference type="PROSITE-ProRule" id="PRU10027"/>
    </source>
</evidence>
<evidence type="ECO:0000256" key="7">
    <source>
        <dbReference type="SAM" id="MobiDB-lite"/>
    </source>
</evidence>
<evidence type="ECO:0000269" key="8">
    <source>
    </source>
</evidence>
<evidence type="ECO:0000305" key="9"/>
<evidence type="ECO:0007744" key="10">
    <source>
    </source>
</evidence>
<evidence type="ECO:0007744" key="11">
    <source>
    </source>
</evidence>
<sequence length="1001" mass="116050">MPSTNRAGSLKDPEIAELFFKEDPEKLFTDLREIGHGSFGAVYFARDVRTNEVVAIKKMSYSGKQSTEKWQDIIKEVKFLQRIKHPNSIEYKGCYLREHTAWLVMEYCLGSASDLLEVHKKPLQEVEIAAITHGALQGLAYLHSHTMIHRDIKAGNILLTEPGQVKLADFGSASMASPANSFVGTPYWMAPEVILAMDEGQYDGKVDVWSLGITCIELAERKPPLFNMNAMSALYHIAQNESPTLQSNEWSDYFRNFVDSCLQKIPQDRPTSEELLKHMFVLRERPETVLIDLIQRTKDAVRELDNLQYRKMKKLLFQEAHNGPAVEAQEEEEEQDHGVGRTGTVNSVGSNQSIPSMSISASSQSSSVNSLPDASDDKSELDMMEGDHTVMSNSSVIHLKPEEENYQEEGDPRTRASDPQSPPQVSRHKSHYRNREHFATIRTASLVTRQMQEHEQDSELREQMSGYKRMRRQHQKQLMTLENKLKAEMDEHRLRLDKDLETQRNNFAAEMEKLIKKHQAAMEKEAKVMANEEKKFQQHIQAQQKKELNSFLESQKREYKLRKEQLKEELNENQSTPKKEKQEWLSKQKENIQHFQAEEEANLLRRQRQYLELECRRFKRRMLLGRHNLEQDLVREELNKRQTQKDLEHAMLLRQHESMQELEFRHLNTIQKMRCELIRLQHQTELTNQLEYNKRRERELRRKHVMEVRQQPKSLKSKELQIKKQFQDTCKIQTRQYKALRNHLLETTPKSEHKAVLKRLKEEQTRKLAILAEQYDHSINEMLSTQALRLDEAQEAECQVLKMQLQQELELLNAYQSKIKMQAEAQHDRELRELEQRVSLRRALLEQKIEEEMLALQNERTERIRSLLERQAREIEAFDSESMRLGFSNMVLSNLSPEAFSHSYPGASSWSHNPTGGPGPHWGHPMGGTPQAWGHPMQGGPQPWGHPSGPMQGVPRGSSMGVRNSPQALRRTASGGRTEQGMSRSTSVTSQISNGSHMSYT</sequence>
<feature type="chain" id="PRO_0000086729" description="Serine/threonine-protein kinase TAO1">
    <location>
        <begin position="1"/>
        <end position="1001"/>
    </location>
</feature>
<feature type="domain" description="Protein kinase" evidence="5">
    <location>
        <begin position="28"/>
        <end position="281"/>
    </location>
</feature>
<feature type="region of interest" description="Disordered" evidence="7">
    <location>
        <begin position="324"/>
        <end position="380"/>
    </location>
</feature>
<feature type="region of interest" description="Disordered" evidence="7">
    <location>
        <begin position="404"/>
        <end position="433"/>
    </location>
</feature>
<feature type="region of interest" description="Disordered" evidence="7">
    <location>
        <begin position="567"/>
        <end position="587"/>
    </location>
</feature>
<feature type="region of interest" description="Disordered" evidence="7">
    <location>
        <begin position="905"/>
        <end position="1001"/>
    </location>
</feature>
<feature type="coiled-coil region" evidence="4">
    <location>
        <begin position="458"/>
        <end position="651"/>
    </location>
</feature>
<feature type="coiled-coil region" evidence="4">
    <location>
        <begin position="754"/>
        <end position="877"/>
    </location>
</feature>
<feature type="compositionally biased region" description="Low complexity" evidence="7">
    <location>
        <begin position="350"/>
        <end position="370"/>
    </location>
</feature>
<feature type="compositionally biased region" description="Basic and acidic residues" evidence="7">
    <location>
        <begin position="577"/>
        <end position="587"/>
    </location>
</feature>
<feature type="compositionally biased region" description="Low complexity" evidence="7">
    <location>
        <begin position="921"/>
        <end position="930"/>
    </location>
</feature>
<feature type="compositionally biased region" description="Polar residues" evidence="7">
    <location>
        <begin position="975"/>
        <end position="1001"/>
    </location>
</feature>
<feature type="active site" description="Proton acceptor" evidence="5 6">
    <location>
        <position position="151"/>
    </location>
</feature>
<feature type="binding site" evidence="5">
    <location>
        <begin position="34"/>
        <end position="42"/>
    </location>
    <ligand>
        <name>ATP</name>
        <dbReference type="ChEBI" id="CHEBI:30616"/>
    </ligand>
</feature>
<feature type="binding site" evidence="5">
    <location>
        <position position="57"/>
    </location>
    <ligand>
        <name>ATP</name>
        <dbReference type="ChEBI" id="CHEBI:30616"/>
    </ligand>
</feature>
<feature type="modified residue" description="Phosphoserine" evidence="11">
    <location>
        <position position="9"/>
    </location>
</feature>
<feature type="modified residue" description="Phosphoserine" evidence="10 11">
    <location>
        <position position="421"/>
    </location>
</feature>
<feature type="modified residue" description="Phosphoserine" evidence="3">
    <location>
        <position position="445"/>
    </location>
</feature>
<feature type="modified residue" description="Phosphothreonine" evidence="3">
    <location>
        <position position="669"/>
    </location>
</feature>
<feature type="modified residue" description="Phosphoserine" evidence="3">
    <location>
        <position position="965"/>
    </location>
</feature>
<comment type="function">
    <text evidence="1 8">Serine/threonine-protein kinase involved in various processes such as p38/MAPK14 stress-activated MAPK cascade, DNA damage response and regulation of cytoskeleton stability. Phosphorylates MAP2K3, MAP2K6 and MARK2. Acts as an activator of the p38/MAPK14 stress-activated MAPK cascade by mediating phosphorylation and subsequent activation of the upstream MAP2K3 and MAP2K6 kinases. Involved in G-protein coupled receptor signaling to p38/MAPK14. In response to DNA damage, involved in the G2/M transition DNA damage checkpoint by activating the p38/MAPK14 stress-activated MAPK cascade, probably by mediating phosphorylation of MAP2K3 and MAP2K6. Acts as a regulator of cytoskeleton stability by phosphorylating 'Thr-208' of MARK2, leading to activate MARK2 kinase activity and subsequent phosphorylation and detachment of MAPT/TAU from microtubules. Also acts as a regulator of apoptosis: regulates apoptotic morphological changes, including cell contraction, membrane blebbing and apoptotic bodies formation via activation of the MAPK8/JNK cascade (By similarity). During fetal development, it plays an essential role in the regulation of neuronal differentiation and migration to the cortical plate (PubMed:33565190).</text>
</comment>
<comment type="catalytic activity">
    <reaction>
        <text>L-seryl-[protein] + ATP = O-phospho-L-seryl-[protein] + ADP + H(+)</text>
        <dbReference type="Rhea" id="RHEA:17989"/>
        <dbReference type="Rhea" id="RHEA-COMP:9863"/>
        <dbReference type="Rhea" id="RHEA-COMP:11604"/>
        <dbReference type="ChEBI" id="CHEBI:15378"/>
        <dbReference type="ChEBI" id="CHEBI:29999"/>
        <dbReference type="ChEBI" id="CHEBI:30616"/>
        <dbReference type="ChEBI" id="CHEBI:83421"/>
        <dbReference type="ChEBI" id="CHEBI:456216"/>
        <dbReference type="EC" id="2.7.11.1"/>
    </reaction>
</comment>
<comment type="catalytic activity">
    <reaction>
        <text>L-threonyl-[protein] + ATP = O-phospho-L-threonyl-[protein] + ADP + H(+)</text>
        <dbReference type="Rhea" id="RHEA:46608"/>
        <dbReference type="Rhea" id="RHEA-COMP:11060"/>
        <dbReference type="Rhea" id="RHEA-COMP:11605"/>
        <dbReference type="ChEBI" id="CHEBI:15378"/>
        <dbReference type="ChEBI" id="CHEBI:30013"/>
        <dbReference type="ChEBI" id="CHEBI:30616"/>
        <dbReference type="ChEBI" id="CHEBI:61977"/>
        <dbReference type="ChEBI" id="CHEBI:456216"/>
        <dbReference type="EC" id="2.7.11.1"/>
    </reaction>
</comment>
<comment type="activity regulation">
    <text evidence="1">Serine/threonine-protein kinase activity is inhibited by SPRED1.</text>
</comment>
<comment type="subunit">
    <text evidence="1 2">Self-associates. Interacts with MAP2K3. Interacts with SPRED1 (By similarity). Interacts with TESK1; the interaction inhibits TAOK1 kinase activity (By similarity). Interacts with MAP3K7 (By similarity).</text>
</comment>
<comment type="subcellular location">
    <subcellularLocation>
        <location evidence="1">Cytoplasm</location>
    </subcellularLocation>
</comment>
<comment type="PTM">
    <text>Proteolytically processed by caspase-3 (CASP3).</text>
</comment>
<comment type="PTM">
    <text evidence="1">Autophosphorylated (By similarity). Phosphorylated by ATM in response to DNA damage. Phosphorylated by LRRK2.</text>
</comment>
<comment type="similarity">
    <text evidence="9">Belongs to the protein kinase superfamily. STE Ser/Thr protein kinase family. STE20 subfamily.</text>
</comment>
<comment type="sequence caution" evidence="9">
    <conflict type="erroneous initiation">
        <sequence resource="EMBL-CDS" id="AAH16522"/>
    </conflict>
</comment>
<comment type="sequence caution" evidence="9">
    <conflict type="erroneous initiation">
        <sequence resource="EMBL-CDS" id="BAD32434"/>
    </conflict>
</comment>
<protein>
    <recommendedName>
        <fullName>Serine/threonine-protein kinase TAO1</fullName>
        <ecNumber>2.7.11.1</ecNumber>
    </recommendedName>
    <alternativeName>
        <fullName>Thousand and one amino acid protein 1</fullName>
    </alternativeName>
</protein>
<keyword id="KW-0053">Apoptosis</keyword>
<keyword id="KW-0067">ATP-binding</keyword>
<keyword id="KW-0175">Coiled coil</keyword>
<keyword id="KW-0963">Cytoplasm</keyword>
<keyword id="KW-0227">DNA damage</keyword>
<keyword id="KW-0234">DNA repair</keyword>
<keyword id="KW-0418">Kinase</keyword>
<keyword id="KW-0547">Nucleotide-binding</keyword>
<keyword id="KW-0597">Phosphoprotein</keyword>
<keyword id="KW-1185">Reference proteome</keyword>
<keyword id="KW-0723">Serine/threonine-protein kinase</keyword>
<keyword id="KW-0808">Transferase</keyword>